<reference key="1">
    <citation type="submission" date="2003-10" db="EMBL/GenBank/DDBJ databases">
        <title>The complete genome sequence of the alkaliphilic Bacillus clausii KSM-K16.</title>
        <authorList>
            <person name="Takaki Y."/>
            <person name="Kageyama Y."/>
            <person name="Shimamura S."/>
            <person name="Suzuki H."/>
            <person name="Nishi S."/>
            <person name="Hatada Y."/>
            <person name="Kawai S."/>
            <person name="Ito S."/>
            <person name="Horikoshi K."/>
        </authorList>
    </citation>
    <scope>NUCLEOTIDE SEQUENCE [LARGE SCALE GENOMIC DNA]</scope>
    <source>
        <strain>KSM-K16</strain>
    </source>
</reference>
<protein>
    <recommendedName>
        <fullName evidence="1">Chaperone protein DnaJ</fullName>
    </recommendedName>
</protein>
<sequence length="372" mass="40795">MSKRDYYEVLGVDRNASVEEVKKAYRKLARKYHPDVNKEEDAEAKFKEVKEAYDTLSDPQKKARYDQFGHADPNQGFGGAGASGDFGGFSDIFDMFFGGGGGRRNPNAPRQGDDLQYTMTLEFKEAVFGKETEIEIPREETCGTCHGSGAKPGTKPDTCSHCGGSGQLNVEQNTPFGRVVNRRVCNYCEGTGKIIKQKCATCSGKGKVRKRKKINIQVPAGIDNGQQLRVAGQGEAGANGGPPGDLYVVFQVKPHEFFERDGEDIYCEVPLTFPQVALGDEIEVPTLTGKVKLKIPAGTQTGTSFRLRGKGVPNVHGRGQGDQHVQVRVVTPKNLTENEKELMREFAGMSGGRPEEQNDGFFDKLRRAFKGD</sequence>
<gene>
    <name evidence="1" type="primary">dnaJ</name>
    <name type="ordered locus">ABC1660</name>
</gene>
<feature type="chain" id="PRO_0000070724" description="Chaperone protein DnaJ">
    <location>
        <begin position="1"/>
        <end position="372"/>
    </location>
</feature>
<feature type="domain" description="J" evidence="1">
    <location>
        <begin position="5"/>
        <end position="69"/>
    </location>
</feature>
<feature type="repeat" description="CXXCXGXG motif">
    <location>
        <begin position="142"/>
        <end position="149"/>
    </location>
</feature>
<feature type="repeat" description="CXXCXGXG motif">
    <location>
        <begin position="159"/>
        <end position="166"/>
    </location>
</feature>
<feature type="repeat" description="CXXCXGXG motif">
    <location>
        <begin position="185"/>
        <end position="192"/>
    </location>
</feature>
<feature type="repeat" description="CXXCXGXG motif">
    <location>
        <begin position="199"/>
        <end position="206"/>
    </location>
</feature>
<feature type="zinc finger region" description="CR-type" evidence="1">
    <location>
        <begin position="129"/>
        <end position="211"/>
    </location>
</feature>
<feature type="binding site" evidence="1">
    <location>
        <position position="142"/>
    </location>
    <ligand>
        <name>Zn(2+)</name>
        <dbReference type="ChEBI" id="CHEBI:29105"/>
        <label>1</label>
    </ligand>
</feature>
<feature type="binding site" evidence="1">
    <location>
        <position position="145"/>
    </location>
    <ligand>
        <name>Zn(2+)</name>
        <dbReference type="ChEBI" id="CHEBI:29105"/>
        <label>1</label>
    </ligand>
</feature>
<feature type="binding site" evidence="1">
    <location>
        <position position="159"/>
    </location>
    <ligand>
        <name>Zn(2+)</name>
        <dbReference type="ChEBI" id="CHEBI:29105"/>
        <label>2</label>
    </ligand>
</feature>
<feature type="binding site" evidence="1">
    <location>
        <position position="162"/>
    </location>
    <ligand>
        <name>Zn(2+)</name>
        <dbReference type="ChEBI" id="CHEBI:29105"/>
        <label>2</label>
    </ligand>
</feature>
<feature type="binding site" evidence="1">
    <location>
        <position position="185"/>
    </location>
    <ligand>
        <name>Zn(2+)</name>
        <dbReference type="ChEBI" id="CHEBI:29105"/>
        <label>2</label>
    </ligand>
</feature>
<feature type="binding site" evidence="1">
    <location>
        <position position="188"/>
    </location>
    <ligand>
        <name>Zn(2+)</name>
        <dbReference type="ChEBI" id="CHEBI:29105"/>
        <label>2</label>
    </ligand>
</feature>
<feature type="binding site" evidence="1">
    <location>
        <position position="199"/>
    </location>
    <ligand>
        <name>Zn(2+)</name>
        <dbReference type="ChEBI" id="CHEBI:29105"/>
        <label>1</label>
    </ligand>
</feature>
<feature type="binding site" evidence="1">
    <location>
        <position position="202"/>
    </location>
    <ligand>
        <name>Zn(2+)</name>
        <dbReference type="ChEBI" id="CHEBI:29105"/>
        <label>1</label>
    </ligand>
</feature>
<keyword id="KW-0143">Chaperone</keyword>
<keyword id="KW-0963">Cytoplasm</keyword>
<keyword id="KW-0235">DNA replication</keyword>
<keyword id="KW-0479">Metal-binding</keyword>
<keyword id="KW-1185">Reference proteome</keyword>
<keyword id="KW-0677">Repeat</keyword>
<keyword id="KW-0346">Stress response</keyword>
<keyword id="KW-0862">Zinc</keyword>
<keyword id="KW-0863">Zinc-finger</keyword>
<comment type="function">
    <text evidence="1">Participates actively in the response to hyperosmotic and heat shock by preventing the aggregation of stress-denatured proteins and by disaggregating proteins, also in an autonomous, DnaK-independent fashion. Unfolded proteins bind initially to DnaJ; upon interaction with the DnaJ-bound protein, DnaK hydrolyzes its bound ATP, resulting in the formation of a stable complex. GrpE releases ADP from DnaK; ATP binding to DnaK triggers the release of the substrate protein, thus completing the reaction cycle. Several rounds of ATP-dependent interactions between DnaJ, DnaK and GrpE are required for fully efficient folding. Also involved, together with DnaK and GrpE, in the DNA replication of plasmids through activation of initiation proteins.</text>
</comment>
<comment type="cofactor">
    <cofactor evidence="1">
        <name>Zn(2+)</name>
        <dbReference type="ChEBI" id="CHEBI:29105"/>
    </cofactor>
    <text evidence="1">Binds 2 Zn(2+) ions per monomer.</text>
</comment>
<comment type="subunit">
    <text evidence="1">Homodimer.</text>
</comment>
<comment type="subcellular location">
    <subcellularLocation>
        <location evidence="1">Cytoplasm</location>
    </subcellularLocation>
</comment>
<comment type="domain">
    <text evidence="1">The J domain is necessary and sufficient to stimulate DnaK ATPase activity. Zinc center 1 plays an important role in the autonomous, DnaK-independent chaperone activity of DnaJ. Zinc center 2 is essential for interaction with DnaK and for DnaJ activity.</text>
</comment>
<comment type="similarity">
    <text evidence="1">Belongs to the DnaJ family.</text>
</comment>
<dbReference type="EMBL" id="AP006627">
    <property type="protein sequence ID" value="BAD64195.1"/>
    <property type="molecule type" value="Genomic_DNA"/>
</dbReference>
<dbReference type="RefSeq" id="WP_011246504.1">
    <property type="nucleotide sequence ID" value="NC_006582.1"/>
</dbReference>
<dbReference type="SMR" id="Q5WHG0"/>
<dbReference type="STRING" id="66692.ABC1660"/>
<dbReference type="KEGG" id="bcl:ABC1660"/>
<dbReference type="eggNOG" id="COG0484">
    <property type="taxonomic scope" value="Bacteria"/>
</dbReference>
<dbReference type="HOGENOM" id="CLU_017633_0_7_9"/>
<dbReference type="OrthoDB" id="9779889at2"/>
<dbReference type="Proteomes" id="UP000001168">
    <property type="component" value="Chromosome"/>
</dbReference>
<dbReference type="GO" id="GO:0005737">
    <property type="term" value="C:cytoplasm"/>
    <property type="evidence" value="ECO:0007669"/>
    <property type="project" value="UniProtKB-SubCell"/>
</dbReference>
<dbReference type="GO" id="GO:0005524">
    <property type="term" value="F:ATP binding"/>
    <property type="evidence" value="ECO:0007669"/>
    <property type="project" value="InterPro"/>
</dbReference>
<dbReference type="GO" id="GO:0031072">
    <property type="term" value="F:heat shock protein binding"/>
    <property type="evidence" value="ECO:0007669"/>
    <property type="project" value="InterPro"/>
</dbReference>
<dbReference type="GO" id="GO:0051082">
    <property type="term" value="F:unfolded protein binding"/>
    <property type="evidence" value="ECO:0007669"/>
    <property type="project" value="UniProtKB-UniRule"/>
</dbReference>
<dbReference type="GO" id="GO:0008270">
    <property type="term" value="F:zinc ion binding"/>
    <property type="evidence" value="ECO:0007669"/>
    <property type="project" value="UniProtKB-UniRule"/>
</dbReference>
<dbReference type="GO" id="GO:0051085">
    <property type="term" value="P:chaperone cofactor-dependent protein refolding"/>
    <property type="evidence" value="ECO:0007669"/>
    <property type="project" value="TreeGrafter"/>
</dbReference>
<dbReference type="GO" id="GO:0006260">
    <property type="term" value="P:DNA replication"/>
    <property type="evidence" value="ECO:0007669"/>
    <property type="project" value="UniProtKB-KW"/>
</dbReference>
<dbReference type="GO" id="GO:0042026">
    <property type="term" value="P:protein refolding"/>
    <property type="evidence" value="ECO:0007669"/>
    <property type="project" value="TreeGrafter"/>
</dbReference>
<dbReference type="GO" id="GO:0009408">
    <property type="term" value="P:response to heat"/>
    <property type="evidence" value="ECO:0007669"/>
    <property type="project" value="InterPro"/>
</dbReference>
<dbReference type="CDD" id="cd06257">
    <property type="entry name" value="DnaJ"/>
    <property type="match status" value="1"/>
</dbReference>
<dbReference type="CDD" id="cd10747">
    <property type="entry name" value="DnaJ_C"/>
    <property type="match status" value="1"/>
</dbReference>
<dbReference type="CDD" id="cd10719">
    <property type="entry name" value="DnaJ_zf"/>
    <property type="match status" value="1"/>
</dbReference>
<dbReference type="FunFam" id="1.10.287.110:FF:000031">
    <property type="entry name" value="Molecular chaperone DnaJ"/>
    <property type="match status" value="1"/>
</dbReference>
<dbReference type="FunFam" id="2.10.230.10:FF:000002">
    <property type="entry name" value="Molecular chaperone DnaJ"/>
    <property type="match status" value="1"/>
</dbReference>
<dbReference type="FunFam" id="2.60.260.20:FF:000004">
    <property type="entry name" value="Molecular chaperone DnaJ"/>
    <property type="match status" value="1"/>
</dbReference>
<dbReference type="FunFam" id="2.60.260.20:FF:000009">
    <property type="entry name" value="Putative Mitochondrial DnaJ chaperone"/>
    <property type="match status" value="1"/>
</dbReference>
<dbReference type="Gene3D" id="1.10.287.110">
    <property type="entry name" value="DnaJ domain"/>
    <property type="match status" value="1"/>
</dbReference>
<dbReference type="Gene3D" id="2.10.230.10">
    <property type="entry name" value="Heat shock protein DnaJ, cysteine-rich domain"/>
    <property type="match status" value="1"/>
</dbReference>
<dbReference type="Gene3D" id="2.60.260.20">
    <property type="entry name" value="Urease metallochaperone UreE, N-terminal domain"/>
    <property type="match status" value="2"/>
</dbReference>
<dbReference type="HAMAP" id="MF_01152">
    <property type="entry name" value="DnaJ"/>
    <property type="match status" value="1"/>
</dbReference>
<dbReference type="InterPro" id="IPR012724">
    <property type="entry name" value="DnaJ"/>
</dbReference>
<dbReference type="InterPro" id="IPR002939">
    <property type="entry name" value="DnaJ_C"/>
</dbReference>
<dbReference type="InterPro" id="IPR001623">
    <property type="entry name" value="DnaJ_domain"/>
</dbReference>
<dbReference type="InterPro" id="IPR018253">
    <property type="entry name" value="DnaJ_domain_CS"/>
</dbReference>
<dbReference type="InterPro" id="IPR008971">
    <property type="entry name" value="HSP40/DnaJ_pept-bd"/>
</dbReference>
<dbReference type="InterPro" id="IPR001305">
    <property type="entry name" value="HSP_DnaJ_Cys-rich_dom"/>
</dbReference>
<dbReference type="InterPro" id="IPR036410">
    <property type="entry name" value="HSP_DnaJ_Cys-rich_dom_sf"/>
</dbReference>
<dbReference type="InterPro" id="IPR036869">
    <property type="entry name" value="J_dom_sf"/>
</dbReference>
<dbReference type="NCBIfam" id="TIGR02349">
    <property type="entry name" value="DnaJ_bact"/>
    <property type="match status" value="1"/>
</dbReference>
<dbReference type="NCBIfam" id="NF008035">
    <property type="entry name" value="PRK10767.1"/>
    <property type="match status" value="1"/>
</dbReference>
<dbReference type="NCBIfam" id="NF010869">
    <property type="entry name" value="PRK14276.1"/>
    <property type="match status" value="1"/>
</dbReference>
<dbReference type="NCBIfam" id="NF010873">
    <property type="entry name" value="PRK14280.1"/>
    <property type="match status" value="1"/>
</dbReference>
<dbReference type="NCBIfam" id="NF010880">
    <property type="entry name" value="PRK14287.1"/>
    <property type="match status" value="1"/>
</dbReference>
<dbReference type="PANTHER" id="PTHR43096:SF48">
    <property type="entry name" value="CHAPERONE PROTEIN DNAJ"/>
    <property type="match status" value="1"/>
</dbReference>
<dbReference type="PANTHER" id="PTHR43096">
    <property type="entry name" value="DNAJ HOMOLOG 1, MITOCHONDRIAL-RELATED"/>
    <property type="match status" value="1"/>
</dbReference>
<dbReference type="Pfam" id="PF00226">
    <property type="entry name" value="DnaJ"/>
    <property type="match status" value="1"/>
</dbReference>
<dbReference type="Pfam" id="PF01556">
    <property type="entry name" value="DnaJ_C"/>
    <property type="match status" value="1"/>
</dbReference>
<dbReference type="Pfam" id="PF00684">
    <property type="entry name" value="DnaJ_CXXCXGXG"/>
    <property type="match status" value="1"/>
</dbReference>
<dbReference type="PRINTS" id="PR00625">
    <property type="entry name" value="JDOMAIN"/>
</dbReference>
<dbReference type="SMART" id="SM00271">
    <property type="entry name" value="DnaJ"/>
    <property type="match status" value="1"/>
</dbReference>
<dbReference type="SUPFAM" id="SSF46565">
    <property type="entry name" value="Chaperone J-domain"/>
    <property type="match status" value="1"/>
</dbReference>
<dbReference type="SUPFAM" id="SSF57938">
    <property type="entry name" value="DnaJ/Hsp40 cysteine-rich domain"/>
    <property type="match status" value="1"/>
</dbReference>
<dbReference type="SUPFAM" id="SSF49493">
    <property type="entry name" value="HSP40/DnaJ peptide-binding domain"/>
    <property type="match status" value="2"/>
</dbReference>
<dbReference type="PROSITE" id="PS00636">
    <property type="entry name" value="DNAJ_1"/>
    <property type="match status" value="1"/>
</dbReference>
<dbReference type="PROSITE" id="PS50076">
    <property type="entry name" value="DNAJ_2"/>
    <property type="match status" value="1"/>
</dbReference>
<dbReference type="PROSITE" id="PS51188">
    <property type="entry name" value="ZF_CR"/>
    <property type="match status" value="1"/>
</dbReference>
<organism>
    <name type="scientific">Shouchella clausii (strain KSM-K16)</name>
    <name type="common">Alkalihalobacillus clausii</name>
    <dbReference type="NCBI Taxonomy" id="66692"/>
    <lineage>
        <taxon>Bacteria</taxon>
        <taxon>Bacillati</taxon>
        <taxon>Bacillota</taxon>
        <taxon>Bacilli</taxon>
        <taxon>Bacillales</taxon>
        <taxon>Bacillaceae</taxon>
        <taxon>Shouchella</taxon>
    </lineage>
</organism>
<proteinExistence type="inferred from homology"/>
<name>DNAJ_SHOC1</name>
<accession>Q5WHG0</accession>
<evidence type="ECO:0000255" key="1">
    <source>
        <dbReference type="HAMAP-Rule" id="MF_01152"/>
    </source>
</evidence>